<reference key="1">
    <citation type="journal article" date="2009" name="Proc. Natl. Acad. Sci. U.S.A.">
        <title>The mosaic genome structure of the Wolbachia wRi strain infecting Drosophila simulans.</title>
        <authorList>
            <person name="Klasson L."/>
            <person name="Westberg J."/>
            <person name="Sapountzis P."/>
            <person name="Naeslund K."/>
            <person name="Lutnaes Y."/>
            <person name="Darby A.C."/>
            <person name="Veneti Z."/>
            <person name="Chen L."/>
            <person name="Braig H.R."/>
            <person name="Garrett R."/>
            <person name="Bourtzis K."/>
            <person name="Andersson S.G."/>
        </authorList>
    </citation>
    <scope>NUCLEOTIDE SEQUENCE [LARGE SCALE GENOMIC DNA]</scope>
    <source>
        <strain>wRi</strain>
    </source>
</reference>
<comment type="function">
    <text evidence="1">Endonuclease that specifically degrades the RNA of RNA-DNA hybrids.</text>
</comment>
<comment type="catalytic activity">
    <reaction evidence="1">
        <text>Endonucleolytic cleavage to 5'-phosphomonoester.</text>
        <dbReference type="EC" id="3.1.26.4"/>
    </reaction>
</comment>
<comment type="cofactor">
    <cofactor evidence="1">
        <name>Mg(2+)</name>
        <dbReference type="ChEBI" id="CHEBI:18420"/>
    </cofactor>
    <text evidence="1">Binds 1 Mg(2+) ion per subunit. May bind a second metal ion at a regulatory site, or after substrate binding.</text>
</comment>
<comment type="subunit">
    <text evidence="1">Monomer.</text>
</comment>
<comment type="subcellular location">
    <subcellularLocation>
        <location evidence="1">Cytoplasm</location>
    </subcellularLocation>
</comment>
<comment type="similarity">
    <text evidence="1">Belongs to the RNase H family.</text>
</comment>
<feature type="chain" id="PRO_1000194439" description="Ribonuclease H">
    <location>
        <begin position="1"/>
        <end position="145"/>
    </location>
</feature>
<feature type="domain" description="RNase H type-1" evidence="2">
    <location>
        <begin position="2"/>
        <end position="143"/>
    </location>
</feature>
<feature type="binding site" evidence="1">
    <location>
        <position position="11"/>
    </location>
    <ligand>
        <name>Mg(2+)</name>
        <dbReference type="ChEBI" id="CHEBI:18420"/>
        <label>1</label>
    </ligand>
</feature>
<feature type="binding site" evidence="1">
    <location>
        <position position="11"/>
    </location>
    <ligand>
        <name>Mg(2+)</name>
        <dbReference type="ChEBI" id="CHEBI:18420"/>
        <label>2</label>
    </ligand>
</feature>
<feature type="binding site" evidence="1">
    <location>
        <position position="49"/>
    </location>
    <ligand>
        <name>Mg(2+)</name>
        <dbReference type="ChEBI" id="CHEBI:18420"/>
        <label>1</label>
    </ligand>
</feature>
<feature type="binding site" evidence="1">
    <location>
        <position position="71"/>
    </location>
    <ligand>
        <name>Mg(2+)</name>
        <dbReference type="ChEBI" id="CHEBI:18420"/>
        <label>1</label>
    </ligand>
</feature>
<feature type="binding site" evidence="1">
    <location>
        <position position="135"/>
    </location>
    <ligand>
        <name>Mg(2+)</name>
        <dbReference type="ChEBI" id="CHEBI:18420"/>
        <label>2</label>
    </ligand>
</feature>
<keyword id="KW-0963">Cytoplasm</keyword>
<keyword id="KW-0255">Endonuclease</keyword>
<keyword id="KW-0378">Hydrolase</keyword>
<keyword id="KW-0460">Magnesium</keyword>
<keyword id="KW-0479">Metal-binding</keyword>
<keyword id="KW-0540">Nuclease</keyword>
<organism>
    <name type="scientific">Wolbachia sp. subsp. Drosophila simulans (strain wRi)</name>
    <dbReference type="NCBI Taxonomy" id="66084"/>
    <lineage>
        <taxon>Bacteria</taxon>
        <taxon>Pseudomonadati</taxon>
        <taxon>Pseudomonadota</taxon>
        <taxon>Alphaproteobacteria</taxon>
        <taxon>Rickettsiales</taxon>
        <taxon>Anaplasmataceae</taxon>
        <taxon>Wolbachieae</taxon>
        <taxon>Wolbachia</taxon>
    </lineage>
</organism>
<evidence type="ECO:0000255" key="1">
    <source>
        <dbReference type="HAMAP-Rule" id="MF_00042"/>
    </source>
</evidence>
<evidence type="ECO:0000255" key="2">
    <source>
        <dbReference type="PROSITE-ProRule" id="PRU00408"/>
    </source>
</evidence>
<name>RNH_WOLWR</name>
<accession>C0R2X2</accession>
<gene>
    <name evidence="1" type="primary">rnhA</name>
    <name type="ordered locus">WRi_004800</name>
</gene>
<proteinExistence type="inferred from homology"/>
<protein>
    <recommendedName>
        <fullName evidence="1">Ribonuclease H</fullName>
        <shortName evidence="1">RNase H</shortName>
        <ecNumber evidence="1">3.1.26.4</ecNumber>
    </recommendedName>
</protein>
<sequence>MSKKEVAIYTDGACSGNPGAGGWAAIILFQDYRKDIYGREENTTNNKMELTAVINGLKVLKFSCNINLYTDSLYVKHGITEWINKWKMNGWKTSNKKSVKNMELWKELDNVASQHEIDWKWVKAHSGDKYNEEADSLARKAIIDA</sequence>
<dbReference type="EC" id="3.1.26.4" evidence="1"/>
<dbReference type="EMBL" id="CP001391">
    <property type="protein sequence ID" value="ACN95264.1"/>
    <property type="molecule type" value="Genomic_DNA"/>
</dbReference>
<dbReference type="RefSeq" id="WP_007548952.1">
    <property type="nucleotide sequence ID" value="NZ_MKIF01000200.1"/>
</dbReference>
<dbReference type="SMR" id="C0R2X2"/>
<dbReference type="STRING" id="66084.WRi_004800"/>
<dbReference type="KEGG" id="wri:WRi_004800"/>
<dbReference type="HOGENOM" id="CLU_030894_6_0_5"/>
<dbReference type="Proteomes" id="UP000001293">
    <property type="component" value="Chromosome"/>
</dbReference>
<dbReference type="GO" id="GO:0005737">
    <property type="term" value="C:cytoplasm"/>
    <property type="evidence" value="ECO:0007669"/>
    <property type="project" value="UniProtKB-SubCell"/>
</dbReference>
<dbReference type="GO" id="GO:0000287">
    <property type="term" value="F:magnesium ion binding"/>
    <property type="evidence" value="ECO:0007669"/>
    <property type="project" value="UniProtKB-UniRule"/>
</dbReference>
<dbReference type="GO" id="GO:0003676">
    <property type="term" value="F:nucleic acid binding"/>
    <property type="evidence" value="ECO:0007669"/>
    <property type="project" value="InterPro"/>
</dbReference>
<dbReference type="GO" id="GO:0004523">
    <property type="term" value="F:RNA-DNA hybrid ribonuclease activity"/>
    <property type="evidence" value="ECO:0007669"/>
    <property type="project" value="UniProtKB-UniRule"/>
</dbReference>
<dbReference type="GO" id="GO:0043137">
    <property type="term" value="P:DNA replication, removal of RNA primer"/>
    <property type="evidence" value="ECO:0007669"/>
    <property type="project" value="TreeGrafter"/>
</dbReference>
<dbReference type="CDD" id="cd09278">
    <property type="entry name" value="RNase_HI_prokaryote_like"/>
    <property type="match status" value="1"/>
</dbReference>
<dbReference type="FunFam" id="3.30.420.10:FF:000089">
    <property type="entry name" value="Ribonuclease H"/>
    <property type="match status" value="1"/>
</dbReference>
<dbReference type="Gene3D" id="3.30.420.10">
    <property type="entry name" value="Ribonuclease H-like superfamily/Ribonuclease H"/>
    <property type="match status" value="1"/>
</dbReference>
<dbReference type="HAMAP" id="MF_00042">
    <property type="entry name" value="RNase_H"/>
    <property type="match status" value="1"/>
</dbReference>
<dbReference type="InterPro" id="IPR050092">
    <property type="entry name" value="RNase_H"/>
</dbReference>
<dbReference type="InterPro" id="IPR012337">
    <property type="entry name" value="RNaseH-like_sf"/>
</dbReference>
<dbReference type="InterPro" id="IPR002156">
    <property type="entry name" value="RNaseH_domain"/>
</dbReference>
<dbReference type="InterPro" id="IPR036397">
    <property type="entry name" value="RNaseH_sf"/>
</dbReference>
<dbReference type="InterPro" id="IPR022892">
    <property type="entry name" value="RNaseHI"/>
</dbReference>
<dbReference type="NCBIfam" id="NF001236">
    <property type="entry name" value="PRK00203.1"/>
    <property type="match status" value="1"/>
</dbReference>
<dbReference type="PANTHER" id="PTHR10642">
    <property type="entry name" value="RIBONUCLEASE H1"/>
    <property type="match status" value="1"/>
</dbReference>
<dbReference type="PANTHER" id="PTHR10642:SF26">
    <property type="entry name" value="RIBONUCLEASE H1"/>
    <property type="match status" value="1"/>
</dbReference>
<dbReference type="Pfam" id="PF00075">
    <property type="entry name" value="RNase_H"/>
    <property type="match status" value="1"/>
</dbReference>
<dbReference type="SUPFAM" id="SSF53098">
    <property type="entry name" value="Ribonuclease H-like"/>
    <property type="match status" value="1"/>
</dbReference>
<dbReference type="PROSITE" id="PS50879">
    <property type="entry name" value="RNASE_H_1"/>
    <property type="match status" value="1"/>
</dbReference>